<dbReference type="EC" id="1.-.-.-"/>
<dbReference type="EMBL" id="CU329670">
    <property type="protein sequence ID" value="CAB16194.1"/>
    <property type="molecule type" value="Genomic_DNA"/>
</dbReference>
<dbReference type="EMBL" id="D89186">
    <property type="protein sequence ID" value="BAA13848.1"/>
    <property type="molecule type" value="mRNA"/>
</dbReference>
<dbReference type="PIR" id="T38428">
    <property type="entry name" value="T38428"/>
</dbReference>
<dbReference type="PIR" id="T42744">
    <property type="entry name" value="T42744"/>
</dbReference>
<dbReference type="RefSeq" id="NP_594456.1">
    <property type="nucleotide sequence ID" value="NM_001019885.2"/>
</dbReference>
<dbReference type="SMR" id="O13991"/>
<dbReference type="BioGRID" id="279151">
    <property type="interactions" value="12"/>
</dbReference>
<dbReference type="FunCoup" id="O13991">
    <property type="interactions" value="28"/>
</dbReference>
<dbReference type="IntAct" id="O13991">
    <property type="interactions" value="1"/>
</dbReference>
<dbReference type="STRING" id="284812.O13991"/>
<dbReference type="PaxDb" id="4896-SPAC26H5.09c.1"/>
<dbReference type="EnsemblFungi" id="SPAC26H5.09c.1">
    <property type="protein sequence ID" value="SPAC26H5.09c.1:pep"/>
    <property type="gene ID" value="SPAC26H5.09c"/>
</dbReference>
<dbReference type="PomBase" id="SPAC26H5.09c"/>
<dbReference type="VEuPathDB" id="FungiDB:SPAC26H5.09c"/>
<dbReference type="eggNOG" id="KOG2742">
    <property type="taxonomic scope" value="Eukaryota"/>
</dbReference>
<dbReference type="HOGENOM" id="CLU_023194_19_1_1"/>
<dbReference type="InParanoid" id="O13991"/>
<dbReference type="OMA" id="WAHVVLN"/>
<dbReference type="PhylomeDB" id="O13991"/>
<dbReference type="PRO" id="PR:O13991"/>
<dbReference type="Proteomes" id="UP000002485">
    <property type="component" value="Chromosome I"/>
</dbReference>
<dbReference type="GO" id="GO:0005634">
    <property type="term" value="C:nucleus"/>
    <property type="evidence" value="ECO:0007005"/>
    <property type="project" value="PomBase"/>
</dbReference>
<dbReference type="GO" id="GO:0019210">
    <property type="term" value="F:kinase inhibitor activity"/>
    <property type="evidence" value="ECO:0000318"/>
    <property type="project" value="GO_Central"/>
</dbReference>
<dbReference type="GO" id="GO:0000166">
    <property type="term" value="F:nucleotide binding"/>
    <property type="evidence" value="ECO:0007669"/>
    <property type="project" value="InterPro"/>
</dbReference>
<dbReference type="GO" id="GO:0016651">
    <property type="term" value="F:oxidoreductase activity, acting on NAD(P)H"/>
    <property type="evidence" value="ECO:0000266"/>
    <property type="project" value="PomBase"/>
</dbReference>
<dbReference type="GO" id="GO:0006735">
    <property type="term" value="P:NADH regeneration"/>
    <property type="evidence" value="ECO:0000266"/>
    <property type="project" value="PomBase"/>
</dbReference>
<dbReference type="GO" id="GO:0000122">
    <property type="term" value="P:negative regulation of transcription by RNA polymerase II"/>
    <property type="evidence" value="ECO:0000318"/>
    <property type="project" value="GO_Central"/>
</dbReference>
<dbReference type="FunFam" id="3.40.50.720:FF:000228">
    <property type="entry name" value="Putative oxidoreductase yhhX"/>
    <property type="match status" value="1"/>
</dbReference>
<dbReference type="Gene3D" id="3.30.360.10">
    <property type="entry name" value="Dihydrodipicolinate Reductase, domain 2"/>
    <property type="match status" value="1"/>
</dbReference>
<dbReference type="Gene3D" id="3.40.50.720">
    <property type="entry name" value="NAD(P)-binding Rossmann-like Domain"/>
    <property type="match status" value="1"/>
</dbReference>
<dbReference type="InterPro" id="IPR004104">
    <property type="entry name" value="Gfo/Idh/MocA-like_OxRdtase_C"/>
</dbReference>
<dbReference type="InterPro" id="IPR000683">
    <property type="entry name" value="Gfo/Idh/MocA-like_OxRdtase_N"/>
</dbReference>
<dbReference type="InterPro" id="IPR051317">
    <property type="entry name" value="Gfo/Idh/MocA_oxidoreduct"/>
</dbReference>
<dbReference type="InterPro" id="IPR036291">
    <property type="entry name" value="NAD(P)-bd_dom_sf"/>
</dbReference>
<dbReference type="PANTHER" id="PTHR43708">
    <property type="entry name" value="CONSERVED EXPRESSED OXIDOREDUCTASE (EUROFUNG)"/>
    <property type="match status" value="1"/>
</dbReference>
<dbReference type="PANTHER" id="PTHR43708:SF5">
    <property type="entry name" value="CONSERVED EXPRESSED OXIDOREDUCTASE (EUROFUNG)-RELATED"/>
    <property type="match status" value="1"/>
</dbReference>
<dbReference type="Pfam" id="PF01408">
    <property type="entry name" value="GFO_IDH_MocA"/>
    <property type="match status" value="1"/>
</dbReference>
<dbReference type="Pfam" id="PF02894">
    <property type="entry name" value="GFO_IDH_MocA_C"/>
    <property type="match status" value="1"/>
</dbReference>
<dbReference type="SUPFAM" id="SSF51735">
    <property type="entry name" value="NAD(P)-binding Rossmann-fold domains"/>
    <property type="match status" value="1"/>
</dbReference>
<protein>
    <recommendedName>
        <fullName>Uncharacterized oxidoreductase C26H5.09c</fullName>
        <ecNumber>1.-.-.-</ecNumber>
    </recommendedName>
</protein>
<evidence type="ECO:0000305" key="1"/>
<name>YEG9_SCHPO</name>
<organism>
    <name type="scientific">Schizosaccharomyces pombe (strain 972 / ATCC 24843)</name>
    <name type="common">Fission yeast</name>
    <dbReference type="NCBI Taxonomy" id="284812"/>
    <lineage>
        <taxon>Eukaryota</taxon>
        <taxon>Fungi</taxon>
        <taxon>Dikarya</taxon>
        <taxon>Ascomycota</taxon>
        <taxon>Taphrinomycotina</taxon>
        <taxon>Schizosaccharomycetes</taxon>
        <taxon>Schizosaccharomycetales</taxon>
        <taxon>Schizosaccharomycetaceae</taxon>
        <taxon>Schizosaccharomyces</taxon>
    </lineage>
</organism>
<reference key="1">
    <citation type="journal article" date="2002" name="Nature">
        <title>The genome sequence of Schizosaccharomyces pombe.</title>
        <authorList>
            <person name="Wood V."/>
            <person name="Gwilliam R."/>
            <person name="Rajandream M.A."/>
            <person name="Lyne M.H."/>
            <person name="Lyne R."/>
            <person name="Stewart A."/>
            <person name="Sgouros J.G."/>
            <person name="Peat N."/>
            <person name="Hayles J."/>
            <person name="Baker S.G."/>
            <person name="Basham D."/>
            <person name="Bowman S."/>
            <person name="Brooks K."/>
            <person name="Brown D."/>
            <person name="Brown S."/>
            <person name="Chillingworth T."/>
            <person name="Churcher C.M."/>
            <person name="Collins M."/>
            <person name="Connor R."/>
            <person name="Cronin A."/>
            <person name="Davis P."/>
            <person name="Feltwell T."/>
            <person name="Fraser A."/>
            <person name="Gentles S."/>
            <person name="Goble A."/>
            <person name="Hamlin N."/>
            <person name="Harris D.E."/>
            <person name="Hidalgo J."/>
            <person name="Hodgson G."/>
            <person name="Holroyd S."/>
            <person name="Hornsby T."/>
            <person name="Howarth S."/>
            <person name="Huckle E.J."/>
            <person name="Hunt S."/>
            <person name="Jagels K."/>
            <person name="James K.D."/>
            <person name="Jones L."/>
            <person name="Jones M."/>
            <person name="Leather S."/>
            <person name="McDonald S."/>
            <person name="McLean J."/>
            <person name="Mooney P."/>
            <person name="Moule S."/>
            <person name="Mungall K.L."/>
            <person name="Murphy L.D."/>
            <person name="Niblett D."/>
            <person name="Odell C."/>
            <person name="Oliver K."/>
            <person name="O'Neil S."/>
            <person name="Pearson D."/>
            <person name="Quail M.A."/>
            <person name="Rabbinowitsch E."/>
            <person name="Rutherford K.M."/>
            <person name="Rutter S."/>
            <person name="Saunders D."/>
            <person name="Seeger K."/>
            <person name="Sharp S."/>
            <person name="Skelton J."/>
            <person name="Simmonds M.N."/>
            <person name="Squares R."/>
            <person name="Squares S."/>
            <person name="Stevens K."/>
            <person name="Taylor K."/>
            <person name="Taylor R.G."/>
            <person name="Tivey A."/>
            <person name="Walsh S.V."/>
            <person name="Warren T."/>
            <person name="Whitehead S."/>
            <person name="Woodward J.R."/>
            <person name="Volckaert G."/>
            <person name="Aert R."/>
            <person name="Robben J."/>
            <person name="Grymonprez B."/>
            <person name="Weltjens I."/>
            <person name="Vanstreels E."/>
            <person name="Rieger M."/>
            <person name="Schaefer M."/>
            <person name="Mueller-Auer S."/>
            <person name="Gabel C."/>
            <person name="Fuchs M."/>
            <person name="Duesterhoeft A."/>
            <person name="Fritzc C."/>
            <person name="Holzer E."/>
            <person name="Moestl D."/>
            <person name="Hilbert H."/>
            <person name="Borzym K."/>
            <person name="Langer I."/>
            <person name="Beck A."/>
            <person name="Lehrach H."/>
            <person name="Reinhardt R."/>
            <person name="Pohl T.M."/>
            <person name="Eger P."/>
            <person name="Zimmermann W."/>
            <person name="Wedler H."/>
            <person name="Wambutt R."/>
            <person name="Purnelle B."/>
            <person name="Goffeau A."/>
            <person name="Cadieu E."/>
            <person name="Dreano S."/>
            <person name="Gloux S."/>
            <person name="Lelaure V."/>
            <person name="Mottier S."/>
            <person name="Galibert F."/>
            <person name="Aves S.J."/>
            <person name="Xiang Z."/>
            <person name="Hunt C."/>
            <person name="Moore K."/>
            <person name="Hurst S.M."/>
            <person name="Lucas M."/>
            <person name="Rochet M."/>
            <person name="Gaillardin C."/>
            <person name="Tallada V.A."/>
            <person name="Garzon A."/>
            <person name="Thode G."/>
            <person name="Daga R.R."/>
            <person name="Cruzado L."/>
            <person name="Jimenez J."/>
            <person name="Sanchez M."/>
            <person name="del Rey F."/>
            <person name="Benito J."/>
            <person name="Dominguez A."/>
            <person name="Revuelta J.L."/>
            <person name="Moreno S."/>
            <person name="Armstrong J."/>
            <person name="Forsburg S.L."/>
            <person name="Cerutti L."/>
            <person name="Lowe T."/>
            <person name="McCombie W.R."/>
            <person name="Paulsen I."/>
            <person name="Potashkin J."/>
            <person name="Shpakovski G.V."/>
            <person name="Ussery D."/>
            <person name="Barrell B.G."/>
            <person name="Nurse P."/>
        </authorList>
    </citation>
    <scope>NUCLEOTIDE SEQUENCE [LARGE SCALE GENOMIC DNA]</scope>
    <source>
        <strain>972 / ATCC 24843</strain>
    </source>
</reference>
<reference key="2">
    <citation type="journal article" date="1997" name="DNA Res.">
        <title>Identification of open reading frames in Schizosaccharomyces pombe cDNAs.</title>
        <authorList>
            <person name="Yoshioka S."/>
            <person name="Kato K."/>
            <person name="Nakai K."/>
            <person name="Okayama H."/>
            <person name="Nojima H."/>
        </authorList>
    </citation>
    <scope>NUCLEOTIDE SEQUENCE [LARGE SCALE MRNA] OF 18-352</scope>
    <source>
        <strain>PR745</strain>
    </source>
</reference>
<gene>
    <name type="ORF">SPAC26H5.09c</name>
</gene>
<sequence>MAPIKTAVLGTGMSAFIFHYPFLKALPNHFEVYAAWERRATSTESKARAAFPNVKVYTKLDELLADSNIELVVISLPPNVHYEVVSQALNAGKHVLCEKPFTPTYGEAKELFDLAKSKNLMLTVYQNRRFDGDFLTAKECIENGRLGEVVQFESHIDRFRLFRKGNWKDVPNPGCGLVYDLGSHLIDQAITLFGTPHSVTAKLESQRQIPPLEVEDCFRIVLHYLPQEGRLPLDVIVCSSSISCGLDMRYIIKGTRGSFLKFGIDPQESQLNEGMSPMDPGYGVDSSHHYATLWTLPPDIDVRHPPKPTKSTLMTIAGDYRRFYLEVHEALVTKTFETSVKPHQVLLVEKIIEAAYKSSQSSTSIPLSE</sequence>
<keyword id="KW-0560">Oxidoreductase</keyword>
<keyword id="KW-1185">Reference proteome</keyword>
<accession>O13991</accession>
<accession>P78837</accession>
<proteinExistence type="evidence at transcript level"/>
<comment type="similarity">
    <text evidence="1">Belongs to the Gfo/Idh/MocA family.</text>
</comment>
<feature type="chain" id="PRO_0000091790" description="Uncharacterized oxidoreductase C26H5.09c">
    <location>
        <begin position="1"/>
        <end position="369"/>
    </location>
</feature>
<feature type="sequence conflict" description="In Ref. 2; BAA13848." evidence="1" ref="2">
    <original>A</original>
    <variation>D</variation>
    <location>
        <position position="50"/>
    </location>
</feature>
<feature type="sequence conflict" description="In Ref. 2; BAA13848." evidence="1" ref="2">
    <original>A</original>
    <variation>V</variation>
    <location>
        <position position="91"/>
    </location>
</feature>
<feature type="sequence conflict" description="In Ref. 2; BAA13848." evidence="1" ref="2">
    <original>V</original>
    <variation>L</variation>
    <location>
        <position position="124"/>
    </location>
</feature>